<proteinExistence type="evidence at transcript level"/>
<name>PTVO1_RAT</name>
<comment type="function">
    <text evidence="2">May activate transcription. Required for nuclear translocation of FLOT1. Promotes cell proliferation.</text>
</comment>
<comment type="subunit">
    <text evidence="2">May interact with CREBBP. Interacts with FLOT1.</text>
</comment>
<comment type="subcellular location">
    <subcellularLocation>
        <location evidence="2">Cytoplasm</location>
    </subcellularLocation>
    <subcellularLocation>
        <location evidence="2">Nucleus</location>
    </subcellularLocation>
    <subcellularLocation>
        <location evidence="2">Cell membrane</location>
    </subcellularLocation>
    <subcellularLocation>
        <location evidence="2">Cytoplasm</location>
        <location evidence="2">Perinuclear region</location>
    </subcellularLocation>
    <text evidence="2">Translocates from the cytoplasm to the nucleus at the onset of S-phase. Also localizes to lipid rafts.</text>
</comment>
<comment type="PTM">
    <text evidence="2">Ubiquitinated by the CRL2(KLHDC2) complex, which recognizes the diglycine (Gly-Gly) at the C-terminus, leading to its degradation. Ubiquitinated by the CRL2(APPBP2) complex, which recognizes the Arg-Xaa-Xaa-Gly sequence at the C-terminus, leading to its degradation.</text>
</comment>
<comment type="similarity">
    <text evidence="5">Belongs to the Mediator complex subunit 25 family. PTOV1 subfamily.</text>
</comment>
<comment type="caution">
    <text evidence="5">Despite sequence similarity to MED25, to date this protein has not been identified as a component of the Mediator complex.</text>
</comment>
<protein>
    <recommendedName>
        <fullName>Prostate tumor-overexpressed gene 1 protein homolog</fullName>
    </recommendedName>
</protein>
<feature type="chain" id="PRO_0000304967" description="Prostate tumor-overexpressed gene 1 protein homolog">
    <location>
        <begin position="1"/>
        <end position="416"/>
    </location>
</feature>
<feature type="region of interest" description="Disordered" evidence="4">
    <location>
        <begin position="1"/>
        <end position="53"/>
    </location>
</feature>
<feature type="region of interest" description="Interaction with FLOT1" evidence="1">
    <location>
        <begin position="184"/>
        <end position="416"/>
    </location>
</feature>
<feature type="compositionally biased region" description="Gly residues" evidence="4">
    <location>
        <begin position="12"/>
        <end position="21"/>
    </location>
</feature>
<feature type="compositionally biased region" description="Low complexity" evidence="4">
    <location>
        <begin position="27"/>
        <end position="36"/>
    </location>
</feature>
<feature type="modified residue" description="Phosphoserine" evidence="3">
    <location>
        <position position="53"/>
    </location>
</feature>
<organism>
    <name type="scientific">Rattus norvegicus</name>
    <name type="common">Rat</name>
    <dbReference type="NCBI Taxonomy" id="10116"/>
    <lineage>
        <taxon>Eukaryota</taxon>
        <taxon>Metazoa</taxon>
        <taxon>Chordata</taxon>
        <taxon>Craniata</taxon>
        <taxon>Vertebrata</taxon>
        <taxon>Euteleostomi</taxon>
        <taxon>Mammalia</taxon>
        <taxon>Eutheria</taxon>
        <taxon>Euarchontoglires</taxon>
        <taxon>Glires</taxon>
        <taxon>Rodentia</taxon>
        <taxon>Myomorpha</taxon>
        <taxon>Muroidea</taxon>
        <taxon>Muridae</taxon>
        <taxon>Murinae</taxon>
        <taxon>Rattus</taxon>
    </lineage>
</organism>
<gene>
    <name type="primary">Ptov1</name>
</gene>
<dbReference type="EMBL" id="BC085836">
    <property type="protein sequence ID" value="AAH85836.1"/>
    <property type="molecule type" value="mRNA"/>
</dbReference>
<dbReference type="RefSeq" id="NP_001008305.1">
    <property type="nucleotide sequence ID" value="NM_001008304.1"/>
</dbReference>
<dbReference type="SMR" id="Q5U2W6"/>
<dbReference type="FunCoup" id="Q5U2W6">
    <property type="interactions" value="1350"/>
</dbReference>
<dbReference type="STRING" id="10116.ENSRNOP00000027580"/>
<dbReference type="PhosphoSitePlus" id="Q5U2W6"/>
<dbReference type="PaxDb" id="10116-ENSRNOP00000027580"/>
<dbReference type="Ensembl" id="ENSRNOT00000027580.5">
    <property type="protein sequence ID" value="ENSRNOP00000027580.3"/>
    <property type="gene ID" value="ENSRNOG00000020358.5"/>
</dbReference>
<dbReference type="GeneID" id="292888"/>
<dbReference type="KEGG" id="rno:292888"/>
<dbReference type="UCSC" id="RGD:1306977">
    <property type="organism name" value="rat"/>
</dbReference>
<dbReference type="AGR" id="RGD:1306977"/>
<dbReference type="CTD" id="53635"/>
<dbReference type="RGD" id="1306977">
    <property type="gene designation" value="Ptov1"/>
</dbReference>
<dbReference type="eggNOG" id="ENOG502SS25">
    <property type="taxonomic scope" value="Eukaryota"/>
</dbReference>
<dbReference type="GeneTree" id="ENSGT00940000161923"/>
<dbReference type="HOGENOM" id="CLU_045342_0_0_1"/>
<dbReference type="InParanoid" id="Q5U2W6"/>
<dbReference type="OMA" id="NELLWTG"/>
<dbReference type="OrthoDB" id="7690434at2759"/>
<dbReference type="PhylomeDB" id="Q5U2W6"/>
<dbReference type="TreeFam" id="TF329598"/>
<dbReference type="PRO" id="PR:Q5U2W6"/>
<dbReference type="Proteomes" id="UP000002494">
    <property type="component" value="Chromosome 1"/>
</dbReference>
<dbReference type="Bgee" id="ENSRNOG00000020358">
    <property type="expression patterns" value="Expressed in skeletal muscle tissue and 19 other cell types or tissues"/>
</dbReference>
<dbReference type="GO" id="GO:0005654">
    <property type="term" value="C:nucleoplasm"/>
    <property type="evidence" value="ECO:0007669"/>
    <property type="project" value="Ensembl"/>
</dbReference>
<dbReference type="GO" id="GO:0048471">
    <property type="term" value="C:perinuclear region of cytoplasm"/>
    <property type="evidence" value="ECO:0007669"/>
    <property type="project" value="UniProtKB-SubCell"/>
</dbReference>
<dbReference type="GO" id="GO:0005886">
    <property type="term" value="C:plasma membrane"/>
    <property type="evidence" value="ECO:0007669"/>
    <property type="project" value="UniProtKB-SubCell"/>
</dbReference>
<dbReference type="GO" id="GO:0005667">
    <property type="term" value="C:transcription regulator complex"/>
    <property type="evidence" value="ECO:0000318"/>
    <property type="project" value="GO_Central"/>
</dbReference>
<dbReference type="GO" id="GO:0045944">
    <property type="term" value="P:positive regulation of transcription by RNA polymerase II"/>
    <property type="evidence" value="ECO:0000318"/>
    <property type="project" value="GO_Central"/>
</dbReference>
<dbReference type="FunFam" id="2.40.290.30:FF:000001">
    <property type="entry name" value="Mediator of RNA polymerase II transcription subunit 25"/>
    <property type="match status" value="2"/>
</dbReference>
<dbReference type="Gene3D" id="2.40.290.30">
    <property type="entry name" value="Mediator complex subunit 25, ACID domain"/>
    <property type="match status" value="2"/>
</dbReference>
<dbReference type="InterPro" id="IPR021394">
    <property type="entry name" value="Med25_PTOV"/>
</dbReference>
<dbReference type="InterPro" id="IPR038196">
    <property type="entry name" value="Med25_PTOV_sf"/>
</dbReference>
<dbReference type="PANTHER" id="PTHR12433">
    <property type="entry name" value="MEDIATOR OF RNA POLYMERASE II TRANSCRIPTION SUBUNIT 25"/>
    <property type="match status" value="1"/>
</dbReference>
<dbReference type="PANTHER" id="PTHR12433:SF11">
    <property type="entry name" value="MEDIATOR OF RNA POLYMERASE II TRANSCRIPTION SUBUNIT 25"/>
    <property type="match status" value="1"/>
</dbReference>
<dbReference type="Pfam" id="PF11232">
    <property type="entry name" value="Med25"/>
    <property type="match status" value="2"/>
</dbReference>
<sequence>MVRPRRAPHRSGAGGPLGGRGRPPRPLVVRAVRSRSWPAGPRGPQPPRIRARSAPPMEGARVFGALGPIGPSSPGLTLGGLAVNEHRLSNKLLAWSGVLEWQEKRRPFSDSAAKLKRTLPCQAYVNQGENLETDQWPQKLIMQLIPQQLLTTLGPLFRNSQLAQFHFTNRDCDSLKGLCRIMGNGFAGCMLFPHISPCEVRVLMLLYSSKKKIFMGLIPYDQSGFVNAIRQVITTRKQAVGPGGVHSGPVQIVNNKFLAWSGVMEWQEPRPEPNSRSKRWLPSHVYVNQGEILRTDQWPRRLFMQLIPQQLLTTLVPLFRNSRLVQFHFTKDMETLKSLCRIMDNGFAGCVHFSYKASCEVRVLMLLYSSEKKIFIGLIPHDQSNFVNGIRRVIANQQQVLQRSLEQEQQQRGMGG</sequence>
<reference key="1">
    <citation type="journal article" date="2004" name="Genome Res.">
        <title>The status, quality, and expansion of the NIH full-length cDNA project: the Mammalian Gene Collection (MGC).</title>
        <authorList>
            <consortium name="The MGC Project Team"/>
        </authorList>
    </citation>
    <scope>NUCLEOTIDE SEQUENCE [LARGE SCALE MRNA]</scope>
    <source>
        <tissue>Testis</tissue>
    </source>
</reference>
<evidence type="ECO:0000250" key="1"/>
<evidence type="ECO:0000250" key="2">
    <source>
        <dbReference type="UniProtKB" id="Q86YD1"/>
    </source>
</evidence>
<evidence type="ECO:0000250" key="3">
    <source>
        <dbReference type="UniProtKB" id="Q91VU8"/>
    </source>
</evidence>
<evidence type="ECO:0000256" key="4">
    <source>
        <dbReference type="SAM" id="MobiDB-lite"/>
    </source>
</evidence>
<evidence type="ECO:0000305" key="5"/>
<keyword id="KW-0010">Activator</keyword>
<keyword id="KW-1003">Cell membrane</keyword>
<keyword id="KW-0963">Cytoplasm</keyword>
<keyword id="KW-0472">Membrane</keyword>
<keyword id="KW-0539">Nucleus</keyword>
<keyword id="KW-0597">Phosphoprotein</keyword>
<keyword id="KW-1185">Reference proteome</keyword>
<keyword id="KW-0804">Transcription</keyword>
<keyword id="KW-0805">Transcription regulation</keyword>
<keyword id="KW-0832">Ubl conjugation</keyword>
<accession>Q5U2W6</accession>